<feature type="transit peptide" description="Chloroplast" evidence="2">
    <location>
        <begin position="1"/>
        <end position="38"/>
    </location>
</feature>
<feature type="chain" id="PRO_0000249859" description="Large ribosomal subunit protein uL6c">
    <location>
        <begin position="39"/>
        <end position="220"/>
    </location>
</feature>
<feature type="sequence conflict" description="In Ref. 2; AA sequence." evidence="6" ref="2">
    <location>
        <position position="52"/>
    </location>
</feature>
<feature type="helix" evidence="9">
    <location>
        <begin position="42"/>
        <end position="45"/>
    </location>
</feature>
<feature type="strand" evidence="9">
    <location>
        <begin position="55"/>
        <end position="59"/>
    </location>
</feature>
<feature type="strand" evidence="9">
    <location>
        <begin position="62"/>
        <end position="67"/>
    </location>
</feature>
<feature type="strand" evidence="9">
    <location>
        <begin position="70"/>
        <end position="75"/>
    </location>
</feature>
<feature type="strand" evidence="9">
    <location>
        <begin position="78"/>
        <end position="84"/>
    </location>
</feature>
<feature type="strand" evidence="9">
    <location>
        <begin position="86"/>
        <end position="96"/>
    </location>
</feature>
<feature type="helix" evidence="9">
    <location>
        <begin position="99"/>
        <end position="120"/>
    </location>
</feature>
<feature type="strand" evidence="9">
    <location>
        <begin position="123"/>
        <end position="131"/>
    </location>
</feature>
<feature type="strand" evidence="9">
    <location>
        <begin position="135"/>
        <end position="139"/>
    </location>
</feature>
<feature type="strand" evidence="9">
    <location>
        <begin position="142"/>
        <end position="151"/>
    </location>
</feature>
<feature type="strand" evidence="9">
    <location>
        <begin position="153"/>
        <end position="156"/>
    </location>
</feature>
<feature type="strand" evidence="9">
    <location>
        <begin position="162"/>
        <end position="166"/>
    </location>
</feature>
<feature type="turn" evidence="9">
    <location>
        <begin position="167"/>
        <end position="169"/>
    </location>
</feature>
<feature type="strand" evidence="9">
    <location>
        <begin position="170"/>
        <end position="176"/>
    </location>
</feature>
<feature type="helix" evidence="9">
    <location>
        <begin position="178"/>
        <end position="190"/>
    </location>
</feature>
<feature type="turn" evidence="9">
    <location>
        <begin position="196"/>
        <end position="198"/>
    </location>
</feature>
<feature type="strand" evidence="9">
    <location>
        <begin position="201"/>
        <end position="206"/>
    </location>
</feature>
<sequence length="220" mass="24474">MSLPLPSHMKSVFLGMKVEISTSVPVTRIGFWRKSVDCKESRIGKQPITVPANVAIAMEGQDLKVKGPLGELSITYPREVLVEKQESGFLRVRKAVETRRANQMHGLFRTLTDNMVVGVSKGFEKKLQLVGVGYRATVEGKDLILSLGFSHPVRMAIPDELQVKVEENTKVTVSGRDKSVVGQFAATIRSWRPPEPYKGKGVRYVDEVVRRKEGKAGKKK</sequence>
<name>RK6_SPIOL</name>
<keyword id="KW-0002">3D-structure</keyword>
<keyword id="KW-0150">Chloroplast</keyword>
<keyword id="KW-0903">Direct protein sequencing</keyword>
<keyword id="KW-0934">Plastid</keyword>
<keyword id="KW-1185">Reference proteome</keyword>
<keyword id="KW-0687">Ribonucleoprotein</keyword>
<keyword id="KW-0689">Ribosomal protein</keyword>
<keyword id="KW-0694">RNA-binding</keyword>
<keyword id="KW-0699">rRNA-binding</keyword>
<keyword id="KW-0809">Transit peptide</keyword>
<protein>
    <recommendedName>
        <fullName evidence="5">Large ribosomal subunit protein uL6c</fullName>
    </recommendedName>
    <alternativeName>
        <fullName evidence="4">50S ribosomal protein L6, chloroplastic</fullName>
    </alternativeName>
</protein>
<comment type="function">
    <text evidence="7 8">Component of the chloroplast ribosome (chloro-ribosome), a dedicated translation machinery responsible for the synthesis of chloroplast genome-encoded proteins, including proteins of the transcription and translation machinery and components of the photosynthetic apparatus.</text>
</comment>
<comment type="subunit">
    <text evidence="2 3">Component of the chloroplast large ribosomal subunit (LSU). Mature 70S chloroplast ribosomes of higher plants consist of a small (30S) and a large (50S) subunit. The 30S small subunit contains 1 molecule of ribosomal RNA (16S rRNA) and 24 different proteins. The 50S large subunit contains 3 rRNA molecules (23S, 5S and 4.5S rRNA) and 33 different proteins.</text>
</comment>
<comment type="subcellular location">
    <subcellularLocation>
        <location evidence="2 3">Plastid</location>
        <location evidence="2 3">Chloroplast</location>
    </subcellularLocation>
</comment>
<comment type="mass spectrometry" mass="20224.0" method="Electrospray" evidence="2"/>
<comment type="similarity">
    <text evidence="1">Belongs to the universal ribosomal protein uL6 family.</text>
</comment>
<proteinExistence type="evidence at protein level"/>
<accession>P82193</accession>
<accession>A0A0K9R4N9</accession>
<reference key="1">
    <citation type="journal article" date="2014" name="Nature">
        <title>The genome of the recently domesticated crop plant sugar beet (Beta vulgaris).</title>
        <authorList>
            <person name="Dohm J.C."/>
            <person name="Minoche A.E."/>
            <person name="Holtgraewe D."/>
            <person name="Capella-Gutierrez S."/>
            <person name="Zakrzewski F."/>
            <person name="Tafer H."/>
            <person name="Rupp O."/>
            <person name="Soerensen T.R."/>
            <person name="Stracke R."/>
            <person name="Reinhardt R."/>
            <person name="Goesmann A."/>
            <person name="Kraft T."/>
            <person name="Schulz B."/>
            <person name="Stadler P.F."/>
            <person name="Schmidt T."/>
            <person name="Gabaldon T."/>
            <person name="Lehrach H."/>
            <person name="Weisshaar B."/>
            <person name="Himmelbauer H."/>
        </authorList>
    </citation>
    <scope>NUCLEOTIDE SEQUENCE [LARGE SCALE GENOMIC DNA]</scope>
    <source>
        <strain>cv. Viroflay</strain>
        <tissue>Leaf</tissue>
    </source>
</reference>
<reference key="2">
    <citation type="journal article" date="2000" name="J. Biol. Chem.">
        <title>The plastid ribosomal proteins. Identification of all the proteins in the 50S subunit of an organelle ribosome (chloroplast).</title>
        <authorList>
            <person name="Yamaguchi K."/>
            <person name="Subramanian A.R."/>
        </authorList>
    </citation>
    <scope>PROTEIN SEQUENCE OF 39-68</scope>
    <scope>SUBUNIT</scope>
    <scope>SUBCELLULAR LOCATION</scope>
    <scope>MASS SPECTROMETRY</scope>
    <source>
        <strain>cv. Alwaro</strain>
        <tissue>Leaf</tissue>
    </source>
</reference>
<reference key="3">
    <citation type="journal article" date="2007" name="Proc. Natl. Acad. Sci. U.S.A.">
        <title>Cryo-EM study of the spinach chloroplast ribosome reveals the structural and functional roles of plastid-specific ribosomal proteins.</title>
        <authorList>
            <person name="Sharma M.R."/>
            <person name="Wilson D.N."/>
            <person name="Datta P.P."/>
            <person name="Barat C."/>
            <person name="Schluenzen F."/>
            <person name="Fucini P."/>
            <person name="Agrawal R.K."/>
        </authorList>
    </citation>
    <scope>STRUCTURE BY ELECTRON MICROSCOPY (9.4 ANGSTROMS)</scope>
</reference>
<reference key="4">
    <citation type="journal article" date="2016" name="Sci. Rep.">
        <title>Cryo-EM structure of the large subunit of the spinach chloroplast ribosome.</title>
        <authorList>
            <person name="Ahmed T."/>
            <person name="Yin Z."/>
            <person name="Bhushan S."/>
        </authorList>
    </citation>
    <scope>STRUCTURE BY ELECTRON MICROSCOPY (3.50 ANGSTROMS)</scope>
</reference>
<reference key="5">
    <citation type="journal article" date="2017" name="EMBO J.">
        <title>The complete structure of the chloroplast 70S ribosome in complex with translation factor pY.</title>
        <authorList>
            <person name="Bieri P."/>
            <person name="Leibundgut M."/>
            <person name="Saurer M."/>
            <person name="Boehringer D."/>
            <person name="Ban N."/>
        </authorList>
    </citation>
    <scope>STRUCTURE BY ELECTRON MICROSCOPY (3.25 ANGSTROMS)</scope>
    <scope>SUBUNIT</scope>
    <scope>SUBCELLULAR LOCATION</scope>
</reference>
<dbReference type="EMBL" id="KQ150353">
    <property type="protein sequence ID" value="KNA14466.1"/>
    <property type="molecule type" value="Genomic_DNA"/>
</dbReference>
<dbReference type="PDB" id="4V61">
    <property type="method" value="EM"/>
    <property type="resolution" value="9.40 A"/>
    <property type="chains" value="I=39-68"/>
</dbReference>
<dbReference type="PDB" id="5H1S">
    <property type="method" value="EM"/>
    <property type="resolution" value="3.50 A"/>
    <property type="chains" value="I=39-220"/>
</dbReference>
<dbReference type="PDB" id="5MLC">
    <property type="method" value="EM"/>
    <property type="resolution" value="3.90 A"/>
    <property type="chains" value="H=1-220"/>
</dbReference>
<dbReference type="PDB" id="5MMI">
    <property type="method" value="EM"/>
    <property type="resolution" value="3.25 A"/>
    <property type="chains" value="G=1-220"/>
</dbReference>
<dbReference type="PDB" id="5MMM">
    <property type="method" value="EM"/>
    <property type="resolution" value="3.40 A"/>
    <property type="chains" value="G=1-220"/>
</dbReference>
<dbReference type="PDB" id="5X8P">
    <property type="method" value="EM"/>
    <property type="resolution" value="3.40 A"/>
    <property type="chains" value="G=39-220"/>
</dbReference>
<dbReference type="PDB" id="5X8T">
    <property type="method" value="EM"/>
    <property type="resolution" value="3.30 A"/>
    <property type="chains" value="G=39-220"/>
</dbReference>
<dbReference type="PDB" id="6ERI">
    <property type="method" value="EM"/>
    <property type="resolution" value="3.00 A"/>
    <property type="chains" value="AG=44-215"/>
</dbReference>
<dbReference type="PDBsum" id="4V61"/>
<dbReference type="PDBsum" id="5H1S"/>
<dbReference type="PDBsum" id="5MLC"/>
<dbReference type="PDBsum" id="5MMI"/>
<dbReference type="PDBsum" id="5MMM"/>
<dbReference type="PDBsum" id="5X8P"/>
<dbReference type="PDBsum" id="5X8T"/>
<dbReference type="PDBsum" id="6ERI"/>
<dbReference type="EMDB" id="EMD-3525"/>
<dbReference type="EMDB" id="EMD-3531"/>
<dbReference type="EMDB" id="EMD-3533"/>
<dbReference type="EMDB" id="EMD-3941"/>
<dbReference type="EMDB" id="EMD-6709"/>
<dbReference type="EMDB" id="EMD-6711"/>
<dbReference type="EMDB" id="EMD-9572"/>
<dbReference type="SMR" id="P82193"/>
<dbReference type="IntAct" id="P82193">
    <property type="interactions" value="1"/>
</dbReference>
<dbReference type="STRING" id="3562.P82193"/>
<dbReference type="Proteomes" id="UP001155700">
    <property type="component" value="Unplaced"/>
</dbReference>
<dbReference type="GO" id="GO:0009507">
    <property type="term" value="C:chloroplast"/>
    <property type="evidence" value="ECO:0007669"/>
    <property type="project" value="UniProtKB-SubCell"/>
</dbReference>
<dbReference type="GO" id="GO:1990904">
    <property type="term" value="C:ribonucleoprotein complex"/>
    <property type="evidence" value="ECO:0007669"/>
    <property type="project" value="UniProtKB-KW"/>
</dbReference>
<dbReference type="GO" id="GO:0005840">
    <property type="term" value="C:ribosome"/>
    <property type="evidence" value="ECO:0007669"/>
    <property type="project" value="UniProtKB-KW"/>
</dbReference>
<dbReference type="GO" id="GO:0019843">
    <property type="term" value="F:rRNA binding"/>
    <property type="evidence" value="ECO:0007669"/>
    <property type="project" value="UniProtKB-KW"/>
</dbReference>
<dbReference type="GO" id="GO:0003735">
    <property type="term" value="F:structural constituent of ribosome"/>
    <property type="evidence" value="ECO:0000318"/>
    <property type="project" value="GO_Central"/>
</dbReference>
<dbReference type="GO" id="GO:0006412">
    <property type="term" value="P:translation"/>
    <property type="evidence" value="ECO:0007669"/>
    <property type="project" value="InterPro"/>
</dbReference>
<dbReference type="FunFam" id="3.90.930.12:FF:000001">
    <property type="entry name" value="50S ribosomal protein L6"/>
    <property type="match status" value="1"/>
</dbReference>
<dbReference type="FunFam" id="3.90.930.12:FF:000002">
    <property type="entry name" value="50S ribosomal protein L6"/>
    <property type="match status" value="1"/>
</dbReference>
<dbReference type="Gene3D" id="3.90.930.12">
    <property type="entry name" value="Ribosomal protein L6, alpha-beta domain"/>
    <property type="match status" value="2"/>
</dbReference>
<dbReference type="HAMAP" id="MF_01365_B">
    <property type="entry name" value="Ribosomal_uL6_B"/>
    <property type="match status" value="1"/>
</dbReference>
<dbReference type="InterPro" id="IPR000702">
    <property type="entry name" value="Ribosomal_uL6-like"/>
</dbReference>
<dbReference type="InterPro" id="IPR036789">
    <property type="entry name" value="Ribosomal_uL6-like_a/b-dom_sf"/>
</dbReference>
<dbReference type="InterPro" id="IPR020040">
    <property type="entry name" value="Ribosomal_uL6_a/b-dom"/>
</dbReference>
<dbReference type="InterPro" id="IPR019906">
    <property type="entry name" value="Ribosomal_uL6_bac-type"/>
</dbReference>
<dbReference type="InterPro" id="IPR002358">
    <property type="entry name" value="Ribosomal_uL6_CS"/>
</dbReference>
<dbReference type="NCBIfam" id="TIGR03654">
    <property type="entry name" value="L6_bact"/>
    <property type="match status" value="1"/>
</dbReference>
<dbReference type="PANTHER" id="PTHR11655">
    <property type="entry name" value="60S/50S RIBOSOMAL PROTEIN L6/L9"/>
    <property type="match status" value="1"/>
</dbReference>
<dbReference type="PANTHER" id="PTHR11655:SF14">
    <property type="entry name" value="LARGE RIBOSOMAL SUBUNIT PROTEIN UL6M"/>
    <property type="match status" value="1"/>
</dbReference>
<dbReference type="Pfam" id="PF00347">
    <property type="entry name" value="Ribosomal_L6"/>
    <property type="match status" value="2"/>
</dbReference>
<dbReference type="PRINTS" id="PR00059">
    <property type="entry name" value="RIBOSOMALL6"/>
</dbReference>
<dbReference type="SUPFAM" id="SSF56053">
    <property type="entry name" value="Ribosomal protein L6"/>
    <property type="match status" value="2"/>
</dbReference>
<dbReference type="PROSITE" id="PS00525">
    <property type="entry name" value="RIBOSOMAL_L6_1"/>
    <property type="match status" value="1"/>
</dbReference>
<organism>
    <name type="scientific">Spinacia oleracea</name>
    <name type="common">Spinach</name>
    <dbReference type="NCBI Taxonomy" id="3562"/>
    <lineage>
        <taxon>Eukaryota</taxon>
        <taxon>Viridiplantae</taxon>
        <taxon>Streptophyta</taxon>
        <taxon>Embryophyta</taxon>
        <taxon>Tracheophyta</taxon>
        <taxon>Spermatophyta</taxon>
        <taxon>Magnoliopsida</taxon>
        <taxon>eudicotyledons</taxon>
        <taxon>Gunneridae</taxon>
        <taxon>Pentapetalae</taxon>
        <taxon>Caryophyllales</taxon>
        <taxon>Chenopodiaceae</taxon>
        <taxon>Chenopodioideae</taxon>
        <taxon>Anserineae</taxon>
        <taxon>Spinacia</taxon>
    </lineage>
</organism>
<evidence type="ECO:0000255" key="1"/>
<evidence type="ECO:0000269" key="2">
    <source>
    </source>
</evidence>
<evidence type="ECO:0000269" key="3">
    <source>
    </source>
</evidence>
<evidence type="ECO:0000303" key="4">
    <source>
    </source>
</evidence>
<evidence type="ECO:0000303" key="5">
    <source>
    </source>
</evidence>
<evidence type="ECO:0000305" key="6"/>
<evidence type="ECO:0000305" key="7">
    <source>
    </source>
</evidence>
<evidence type="ECO:0000305" key="8">
    <source>
    </source>
</evidence>
<evidence type="ECO:0007829" key="9">
    <source>
        <dbReference type="PDB" id="5MMI"/>
    </source>
</evidence>
<gene>
    <name type="primary">RPL6</name>
    <name type="ORF">SOVF_107200</name>
</gene>